<sequence>MTLGDTLFTLVTFLVLMLAVGKVAWKPVSKMMADRQQKISGDLDYAEKSRKDADALAAKRQEELQHSQADAVKIVNQAKENGEKQRQSLVDAANAEVTTMKKNAQTDIDQARKDALASAKNDVADLSLTIAQKLIGKELNADDQKGLIDDYIKRLGDANGSH</sequence>
<comment type="function">
    <text evidence="1">F(1)F(0) ATP synthase produces ATP from ADP in the presence of a proton or sodium gradient. F-type ATPases consist of two structural domains, F(1) containing the extramembraneous catalytic core and F(0) containing the membrane proton channel, linked together by a central stalk and a peripheral stalk. During catalysis, ATP synthesis in the catalytic domain of F(1) is coupled via a rotary mechanism of the central stalk subunits to proton translocation.</text>
</comment>
<comment type="function">
    <text evidence="1">Component of the F(0) channel, it forms part of the peripheral stalk, linking F(1) to F(0).</text>
</comment>
<comment type="subunit">
    <text evidence="1">F-type ATPases have 2 components, F(1) - the catalytic core - and F(0) - the membrane proton channel. F(1) has five subunits: alpha(3), beta(3), gamma(1), delta(1), epsilon(1). F(0) has three main subunits: a(1), b(2) and c(10-14). The alpha and beta chains form an alternating ring which encloses part of the gamma chain. F(1) is attached to F(0) by a central stalk formed by the gamma and epsilon chains, while a peripheral stalk is formed by the delta and b chains.</text>
</comment>
<comment type="subcellular location">
    <subcellularLocation>
        <location evidence="1">Cell membrane</location>
        <topology evidence="1">Single-pass membrane protein</topology>
    </subcellularLocation>
</comment>
<comment type="similarity">
    <text evidence="1">Belongs to the ATPase B chain family.</text>
</comment>
<keyword id="KW-0066">ATP synthesis</keyword>
<keyword id="KW-1003">Cell membrane</keyword>
<keyword id="KW-0138">CF(0)</keyword>
<keyword id="KW-0375">Hydrogen ion transport</keyword>
<keyword id="KW-0406">Ion transport</keyword>
<keyword id="KW-0472">Membrane</keyword>
<keyword id="KW-0812">Transmembrane</keyword>
<keyword id="KW-1133">Transmembrane helix</keyword>
<keyword id="KW-0813">Transport</keyword>
<feature type="chain" id="PRO_0000368540" description="ATP synthase subunit b">
    <location>
        <begin position="1"/>
        <end position="162"/>
    </location>
</feature>
<feature type="transmembrane region" description="Helical" evidence="1">
    <location>
        <begin position="6"/>
        <end position="25"/>
    </location>
</feature>
<evidence type="ECO:0000255" key="1">
    <source>
        <dbReference type="HAMAP-Rule" id="MF_01398"/>
    </source>
</evidence>
<accession>B3WDL4</accession>
<organism>
    <name type="scientific">Lacticaseibacillus casei (strain BL23)</name>
    <name type="common">Lactobacillus casei</name>
    <dbReference type="NCBI Taxonomy" id="543734"/>
    <lineage>
        <taxon>Bacteria</taxon>
        <taxon>Bacillati</taxon>
        <taxon>Bacillota</taxon>
        <taxon>Bacilli</taxon>
        <taxon>Lactobacillales</taxon>
        <taxon>Lactobacillaceae</taxon>
        <taxon>Lacticaseibacillus</taxon>
    </lineage>
</organism>
<gene>
    <name evidence="1" type="primary">atpF</name>
    <name type="ordered locus">LCABL_13840</name>
</gene>
<proteinExistence type="inferred from homology"/>
<name>ATPF_LACCB</name>
<dbReference type="EMBL" id="FM177140">
    <property type="protein sequence ID" value="CAQ66465.1"/>
    <property type="molecule type" value="Genomic_DNA"/>
</dbReference>
<dbReference type="SMR" id="B3WDL4"/>
<dbReference type="KEGG" id="lcb:LCABL_13840"/>
<dbReference type="HOGENOM" id="CLU_079215_4_2_9"/>
<dbReference type="GO" id="GO:0005886">
    <property type="term" value="C:plasma membrane"/>
    <property type="evidence" value="ECO:0007669"/>
    <property type="project" value="UniProtKB-SubCell"/>
</dbReference>
<dbReference type="GO" id="GO:0045259">
    <property type="term" value="C:proton-transporting ATP synthase complex"/>
    <property type="evidence" value="ECO:0007669"/>
    <property type="project" value="UniProtKB-KW"/>
</dbReference>
<dbReference type="GO" id="GO:0046933">
    <property type="term" value="F:proton-transporting ATP synthase activity, rotational mechanism"/>
    <property type="evidence" value="ECO:0007669"/>
    <property type="project" value="UniProtKB-UniRule"/>
</dbReference>
<dbReference type="GO" id="GO:0046961">
    <property type="term" value="F:proton-transporting ATPase activity, rotational mechanism"/>
    <property type="evidence" value="ECO:0007669"/>
    <property type="project" value="TreeGrafter"/>
</dbReference>
<dbReference type="CDD" id="cd06503">
    <property type="entry name" value="ATP-synt_Fo_b"/>
    <property type="match status" value="1"/>
</dbReference>
<dbReference type="Gene3D" id="6.10.250.1580">
    <property type="match status" value="1"/>
</dbReference>
<dbReference type="HAMAP" id="MF_01398">
    <property type="entry name" value="ATP_synth_b_bprime"/>
    <property type="match status" value="1"/>
</dbReference>
<dbReference type="InterPro" id="IPR028987">
    <property type="entry name" value="ATP_synth_B-like_membr_sf"/>
</dbReference>
<dbReference type="InterPro" id="IPR002146">
    <property type="entry name" value="ATP_synth_b/b'su_bac/chlpt"/>
</dbReference>
<dbReference type="InterPro" id="IPR005864">
    <property type="entry name" value="ATP_synth_F0_bsu_bac"/>
</dbReference>
<dbReference type="InterPro" id="IPR050059">
    <property type="entry name" value="ATP_synthase_B_chain"/>
</dbReference>
<dbReference type="NCBIfam" id="TIGR01144">
    <property type="entry name" value="ATP_synt_b"/>
    <property type="match status" value="1"/>
</dbReference>
<dbReference type="PANTHER" id="PTHR33445:SF1">
    <property type="entry name" value="ATP SYNTHASE SUBUNIT B"/>
    <property type="match status" value="1"/>
</dbReference>
<dbReference type="PANTHER" id="PTHR33445">
    <property type="entry name" value="ATP SYNTHASE SUBUNIT B', CHLOROPLASTIC"/>
    <property type="match status" value="1"/>
</dbReference>
<dbReference type="Pfam" id="PF00430">
    <property type="entry name" value="ATP-synt_B"/>
    <property type="match status" value="1"/>
</dbReference>
<dbReference type="SUPFAM" id="SSF81573">
    <property type="entry name" value="F1F0 ATP synthase subunit B, membrane domain"/>
    <property type="match status" value="1"/>
</dbReference>
<protein>
    <recommendedName>
        <fullName evidence="1">ATP synthase subunit b</fullName>
    </recommendedName>
    <alternativeName>
        <fullName evidence="1">ATP synthase F(0) sector subunit b</fullName>
    </alternativeName>
    <alternativeName>
        <fullName evidence="1">ATPase subunit I</fullName>
    </alternativeName>
    <alternativeName>
        <fullName evidence="1">F-type ATPase subunit b</fullName>
        <shortName evidence="1">F-ATPase subunit b</shortName>
    </alternativeName>
</protein>
<reference key="1">
    <citation type="submission" date="2008-06" db="EMBL/GenBank/DDBJ databases">
        <title>Lactobacillus casei BL23 complete genome sequence.</title>
        <authorList>
            <person name="Maze A."/>
            <person name="Boel G."/>
            <person name="Bourand A."/>
            <person name="Loux V."/>
            <person name="Gibrat J.F."/>
            <person name="Zuniga M."/>
            <person name="Hartke A."/>
            <person name="Deutscher J."/>
        </authorList>
    </citation>
    <scope>NUCLEOTIDE SEQUENCE [LARGE SCALE GENOMIC DNA]</scope>
    <source>
        <strain>BL23</strain>
    </source>
</reference>